<name>METAA_STRP4</name>
<reference key="1">
    <citation type="journal article" date="2001" name="Microb. Drug Resist.">
        <title>Annotated draft genomic sequence from a Streptococcus pneumoniae type 19F clinical isolate.</title>
        <authorList>
            <person name="Dopazo J."/>
            <person name="Mendoza A."/>
            <person name="Herrero J."/>
            <person name="Caldara F."/>
            <person name="Humbert Y."/>
            <person name="Friedli L."/>
            <person name="Guerrier M."/>
            <person name="Grand-Schenk E."/>
            <person name="Gandin C."/>
            <person name="de Francesco M."/>
            <person name="Polissi A."/>
            <person name="Buell G."/>
            <person name="Feger G."/>
            <person name="Garcia E."/>
            <person name="Peitsch M."/>
            <person name="Garcia-Bustos J.F."/>
        </authorList>
    </citation>
    <scope>NUCLEOTIDE SEQUENCE [LARGE SCALE GENOMIC DNA]</scope>
    <source>
        <strain>G54</strain>
    </source>
</reference>
<reference key="2">
    <citation type="submission" date="2008-03" db="EMBL/GenBank/DDBJ databases">
        <title>Pneumococcal beta glucoside metabolism investigated by whole genome comparison.</title>
        <authorList>
            <person name="Mulas L."/>
            <person name="Trappetti C."/>
            <person name="Hakenbeck R."/>
            <person name="Iannelli F."/>
            <person name="Pozzi G."/>
            <person name="Davidsen T.M."/>
            <person name="Tettelin H."/>
            <person name="Oggioni M."/>
        </authorList>
    </citation>
    <scope>NUCLEOTIDE SEQUENCE [LARGE SCALE GENOMIC DNA]</scope>
    <source>
        <strain>G54</strain>
    </source>
</reference>
<dbReference type="EC" id="2.3.1.31" evidence="1"/>
<dbReference type="EMBL" id="CP001015">
    <property type="protein sequence ID" value="ACF56179.1"/>
    <property type="molecule type" value="Genomic_DNA"/>
</dbReference>
<dbReference type="KEGG" id="spx:SPG_1502"/>
<dbReference type="HOGENOM" id="CLU_057851_0_1_9"/>
<dbReference type="UniPathway" id="UPA00051">
    <property type="reaction ID" value="UER00074"/>
</dbReference>
<dbReference type="GO" id="GO:0005737">
    <property type="term" value="C:cytoplasm"/>
    <property type="evidence" value="ECO:0007669"/>
    <property type="project" value="UniProtKB-SubCell"/>
</dbReference>
<dbReference type="GO" id="GO:0004414">
    <property type="term" value="F:homoserine O-acetyltransferase activity"/>
    <property type="evidence" value="ECO:0007669"/>
    <property type="project" value="UniProtKB-EC"/>
</dbReference>
<dbReference type="GO" id="GO:0008899">
    <property type="term" value="F:homoserine O-succinyltransferase activity"/>
    <property type="evidence" value="ECO:0007669"/>
    <property type="project" value="UniProtKB-UniRule"/>
</dbReference>
<dbReference type="GO" id="GO:0019281">
    <property type="term" value="P:L-methionine biosynthetic process from homoserine via O-succinyl-L-homoserine and cystathionine"/>
    <property type="evidence" value="ECO:0007669"/>
    <property type="project" value="InterPro"/>
</dbReference>
<dbReference type="CDD" id="cd03131">
    <property type="entry name" value="GATase1_HTS"/>
    <property type="match status" value="1"/>
</dbReference>
<dbReference type="FunFam" id="3.40.50.880:FF:000004">
    <property type="entry name" value="Homoserine O-succinyltransferase"/>
    <property type="match status" value="1"/>
</dbReference>
<dbReference type="Gene3D" id="3.40.50.880">
    <property type="match status" value="1"/>
</dbReference>
<dbReference type="HAMAP" id="MF_00295">
    <property type="entry name" value="MetA_acyltransf"/>
    <property type="match status" value="1"/>
</dbReference>
<dbReference type="InterPro" id="IPR029062">
    <property type="entry name" value="Class_I_gatase-like"/>
</dbReference>
<dbReference type="InterPro" id="IPR005697">
    <property type="entry name" value="HST_MetA"/>
</dbReference>
<dbReference type="InterPro" id="IPR033752">
    <property type="entry name" value="MetA_family"/>
</dbReference>
<dbReference type="NCBIfam" id="TIGR01001">
    <property type="entry name" value="metA"/>
    <property type="match status" value="1"/>
</dbReference>
<dbReference type="PANTHER" id="PTHR20919">
    <property type="entry name" value="HOMOSERINE O-SUCCINYLTRANSFERASE"/>
    <property type="match status" value="1"/>
</dbReference>
<dbReference type="PANTHER" id="PTHR20919:SF0">
    <property type="entry name" value="HOMOSERINE O-SUCCINYLTRANSFERASE"/>
    <property type="match status" value="1"/>
</dbReference>
<dbReference type="Pfam" id="PF04204">
    <property type="entry name" value="HTS"/>
    <property type="match status" value="1"/>
</dbReference>
<dbReference type="PIRSF" id="PIRSF000450">
    <property type="entry name" value="H_ser_succinyltr"/>
    <property type="match status" value="1"/>
</dbReference>
<dbReference type="SUPFAM" id="SSF52317">
    <property type="entry name" value="Class I glutamine amidotransferase-like"/>
    <property type="match status" value="1"/>
</dbReference>
<gene>
    <name evidence="1" type="primary">metAA</name>
    <name type="ordered locus">SPG_1502</name>
</gene>
<sequence length="314" mass="36920">MPIRIDKKLPAVEILRTENIFVMDDQRAAHQDIRPLKILILNLMPQKMVTETQLLRHLANTPLQLDIDFLYMESHRSKTTRSEHMETFYKTFLEVKDEYFDGMIITGAPVEHLPFEEVDYWEEFRQMLEWSKTHVYSTLHICWGAQAGLYLRYGVEKYQMDSKLSGIYPQDTLKEGHLLFRGFDDSYVSPHSRHTEISKEEVLNKTNLEILSEGPQVGVSILASRDLREIYSFGHLEYDRDTLAKEYFRDRDAGFDPHIPENYFKDDDVNQVPCLCWSSSAALFFSNWVNHAVYQETPFXWRKIXDDASAYGYL</sequence>
<feature type="chain" id="PRO_1000115197" description="Homoserine O-acetyltransferase">
    <location>
        <begin position="1"/>
        <end position="314"/>
    </location>
</feature>
<feature type="active site" description="Acyl-thioester intermediate" evidence="1">
    <location>
        <position position="142"/>
    </location>
</feature>
<feature type="active site" description="Proton acceptor" evidence="1">
    <location>
        <position position="235"/>
    </location>
</feature>
<feature type="active site" evidence="1">
    <location>
        <position position="237"/>
    </location>
</feature>
<feature type="binding site" evidence="1">
    <location>
        <position position="163"/>
    </location>
    <ligand>
        <name>substrate</name>
    </ligand>
</feature>
<feature type="binding site" evidence="1">
    <location>
        <position position="192"/>
    </location>
    <ligand>
        <name>substrate</name>
    </ligand>
</feature>
<feature type="binding site" evidence="1">
    <location>
        <position position="249"/>
    </location>
    <ligand>
        <name>substrate</name>
    </ligand>
</feature>
<feature type="site" description="Important for acyl-CoA specificity" evidence="1">
    <location>
        <position position="111"/>
    </location>
</feature>
<feature type="site" description="Important for substrate specificity" evidence="1">
    <location>
        <position position="192"/>
    </location>
</feature>
<comment type="function">
    <text evidence="1">Transfers an acetyl group from acetyl-CoA to L-homoserine, forming acetyl-L-homoserine.</text>
</comment>
<comment type="catalytic activity">
    <reaction evidence="1">
        <text>L-homoserine + acetyl-CoA = O-acetyl-L-homoserine + CoA</text>
        <dbReference type="Rhea" id="RHEA:13701"/>
        <dbReference type="ChEBI" id="CHEBI:57287"/>
        <dbReference type="ChEBI" id="CHEBI:57288"/>
        <dbReference type="ChEBI" id="CHEBI:57476"/>
        <dbReference type="ChEBI" id="CHEBI:57716"/>
        <dbReference type="EC" id="2.3.1.31"/>
    </reaction>
</comment>
<comment type="pathway">
    <text evidence="1">Amino-acid biosynthesis; L-methionine biosynthesis via de novo pathway; O-acetyl-L-homoserine from L-homoserine: step 1/1.</text>
</comment>
<comment type="subcellular location">
    <subcellularLocation>
        <location evidence="1">Cytoplasm</location>
    </subcellularLocation>
</comment>
<comment type="similarity">
    <text evidence="1">Belongs to the MetA family.</text>
</comment>
<evidence type="ECO:0000255" key="1">
    <source>
        <dbReference type="HAMAP-Rule" id="MF_00295"/>
    </source>
</evidence>
<proteinExistence type="inferred from homology"/>
<organism>
    <name type="scientific">Streptococcus pneumoniae serotype 19F (strain G54)</name>
    <dbReference type="NCBI Taxonomy" id="512566"/>
    <lineage>
        <taxon>Bacteria</taxon>
        <taxon>Bacillati</taxon>
        <taxon>Bacillota</taxon>
        <taxon>Bacilli</taxon>
        <taxon>Lactobacillales</taxon>
        <taxon>Streptococcaceae</taxon>
        <taxon>Streptococcus</taxon>
    </lineage>
</organism>
<protein>
    <recommendedName>
        <fullName evidence="1">Homoserine O-acetyltransferase</fullName>
        <shortName evidence="1">HAT</shortName>
        <ecNumber evidence="1">2.3.1.31</ecNumber>
    </recommendedName>
    <alternativeName>
        <fullName evidence="1">Homoserine transacetylase</fullName>
        <shortName evidence="1">HTA</shortName>
    </alternativeName>
</protein>
<accession>B5E6L9</accession>
<keyword id="KW-0012">Acyltransferase</keyword>
<keyword id="KW-0028">Amino-acid biosynthesis</keyword>
<keyword id="KW-0963">Cytoplasm</keyword>
<keyword id="KW-0486">Methionine biosynthesis</keyword>
<keyword id="KW-0808">Transferase</keyword>